<organism>
    <name type="scientific">Synechocystis sp. (strain ATCC 27184 / PCC 6803 / Kazusa)</name>
    <dbReference type="NCBI Taxonomy" id="1111708"/>
    <lineage>
        <taxon>Bacteria</taxon>
        <taxon>Bacillati</taxon>
        <taxon>Cyanobacteriota</taxon>
        <taxon>Cyanophyceae</taxon>
        <taxon>Synechococcales</taxon>
        <taxon>Merismopediaceae</taxon>
        <taxon>Synechocystis</taxon>
    </lineage>
</organism>
<proteinExistence type="evidence at protein level"/>
<gene>
    <name evidence="7" type="primary">bfrA</name>
    <name type="ordered locus">sll1341</name>
</gene>
<reference key="1">
    <citation type="journal article" date="1996" name="DNA Res.">
        <title>Sequence analysis of the genome of the unicellular cyanobacterium Synechocystis sp. strain PCC6803. II. Sequence determination of the entire genome and assignment of potential protein-coding regions.</title>
        <authorList>
            <person name="Kaneko T."/>
            <person name="Sato S."/>
            <person name="Kotani H."/>
            <person name="Tanaka A."/>
            <person name="Asamizu E."/>
            <person name="Nakamura Y."/>
            <person name="Miyajima N."/>
            <person name="Hirosawa M."/>
            <person name="Sugiura M."/>
            <person name="Sasamoto S."/>
            <person name="Kimura T."/>
            <person name="Hosouchi T."/>
            <person name="Matsuno A."/>
            <person name="Muraki A."/>
            <person name="Nakazaki N."/>
            <person name="Naruo K."/>
            <person name="Okumura S."/>
            <person name="Shimpo S."/>
            <person name="Takeuchi C."/>
            <person name="Wada T."/>
            <person name="Watanabe A."/>
            <person name="Yamada M."/>
            <person name="Yasuda M."/>
            <person name="Tabata S."/>
        </authorList>
    </citation>
    <scope>NUCLEOTIDE SEQUENCE [LARGE SCALE GENOMIC DNA]</scope>
    <source>
        <strain>ATCC 27184 / PCC 6803 / Kazusa</strain>
    </source>
</reference>
<reference key="2">
    <citation type="journal article" date="1992" name="Biochem. J.">
        <title>Purification, characterization and function of bacterioferritin from the cyanobacterium Synechocystis P.C.C. 6803.</title>
        <authorList>
            <person name="Laulhere J.-P."/>
            <person name="Laboure A.-M."/>
            <person name="van Wuytswinkel O."/>
            <person name="Gagnon J."/>
            <person name="Briat J.-F."/>
        </authorList>
    </citation>
    <scope>PROTEIN SEQUENCE OF 1-54</scope>
    <scope>SUBUNIT</scope>
    <scope>SUBCELLULAR LOCATION</scope>
    <scope>INDUCTION</scope>
    <scope>IRON-BINDING</scope>
    <source>
        <strain>ATCC 27184 / PCC 6803 / Kazusa</strain>
    </source>
</reference>
<reference key="3">
    <citation type="journal article" date="2004" name="Plant Physiol.">
        <title>Critical roles of bacterioferritins in iron storage and proliferation of cyanobacteria.</title>
        <authorList>
            <person name="Keren N."/>
            <person name="Aurora R."/>
            <person name="Pakrasi H.B."/>
        </authorList>
    </citation>
    <scope>IDENTIFICATION BY MASS SPECTROMETRY</scope>
    <scope>FUNCTION</scope>
    <scope>SUBUNIT</scope>
    <scope>DISRUPTION PHENOTYPE</scope>
    <scope>PROBABLY DOES NOT BIND HEME</scope>
    <source>
        <strain>ATCC 27184 / PCC 6803 / Kazusa</strain>
    </source>
</reference>
<reference key="4">
    <citation type="journal article" date="2009" name="Plant Physiol.">
        <title>The mechanism of iron homeostasis in the unicellular cyanobacterium synechocystis sp. PCC 6803 and its relationship to oxidative stress.</title>
        <authorList>
            <person name="Shcolnick S."/>
            <person name="Summerfield T.C."/>
            <person name="Reytman L."/>
            <person name="Sherman L.A."/>
            <person name="Keren N."/>
        </authorList>
    </citation>
    <scope>INDUCTION</scope>
    <scope>DISRUPTION PHENOTYPE</scope>
    <source>
        <strain>ATCC 27184 / PCC 6803 / Kazusa</strain>
    </source>
</reference>
<evidence type="ECO:0000250" key="1">
    <source>
        <dbReference type="UniProtKB" id="P0A998"/>
    </source>
</evidence>
<evidence type="ECO:0000250" key="2">
    <source>
        <dbReference type="UniProtKB" id="Q9HWF9"/>
    </source>
</evidence>
<evidence type="ECO:0000255" key="3">
    <source>
        <dbReference type="PROSITE-ProRule" id="PRU00085"/>
    </source>
</evidence>
<evidence type="ECO:0000269" key="4">
    <source>
    </source>
</evidence>
<evidence type="ECO:0000269" key="5">
    <source>
    </source>
</evidence>
<evidence type="ECO:0000269" key="6">
    <source>
    </source>
</evidence>
<evidence type="ECO:0000303" key="7">
    <source>
    </source>
</evidence>
<evidence type="ECO:0000305" key="8"/>
<evidence type="ECO:0000305" key="9">
    <source>
    </source>
</evidence>
<evidence type="ECO:0000305" key="10">
    <source>
    </source>
</evidence>
<sequence length="156" mass="18331">MKGKPAVLAQLHKLLRGELAARDQYFIHSRMYQDWGLEKLYSRIDHEMQDETAHASLLIERILFLEETPDLSQQDPIRVGKTVPEMLQYDLDYEYEVIANLKEAMAVCEQEQDYQSRDLLLKILADTEEDHAYWLEKQLGLIEKIGLQNYLQSQMS</sequence>
<name>FTNA_SYNY3</name>
<comment type="function">
    <text evidence="4 5 9">Part of the iron-storage bacterioferritin (BFR) complex which stores about 50% of intracellular iron (PubMed:15247377). Iron-storage protein, whose ferroxidase center binds Fe(2+), oxidizes it using dioxygen to Fe(3+), and participates in the subsequent Fe(3+) oxide mineral core formation within the central cavity of the BFR protein shell (Probable). BFR rapidly binds iron in labeling experiments in vivo during iron-limiting conditions (PubMed:1536655).</text>
</comment>
<comment type="catalytic activity">
    <reaction evidence="2">
        <text>4 Fe(2+) + O2 + 4 H(+) = 4 Fe(3+) + 2 H2O</text>
        <dbReference type="Rhea" id="RHEA:11148"/>
        <dbReference type="ChEBI" id="CHEBI:15377"/>
        <dbReference type="ChEBI" id="CHEBI:15378"/>
        <dbReference type="ChEBI" id="CHEBI:15379"/>
        <dbReference type="ChEBI" id="CHEBI:29033"/>
        <dbReference type="ChEBI" id="CHEBI:29034"/>
        <dbReference type="EC" id="1.16.3.1"/>
    </reaction>
</comment>
<comment type="catalytic activity">
    <reaction evidence="2">
        <text>Fe(2+)(in) = Fe(2+)(out)</text>
        <dbReference type="Rhea" id="RHEA:28486"/>
        <dbReference type="ChEBI" id="CHEBI:29033"/>
    </reaction>
</comment>
<comment type="subunit">
    <text evidence="2 4 5">The bacterioferritin (BFR) complex is formed of 24 subunits (BfrA and BfrB) of unknown stoichiometry (PubMed:15247377, PubMed:1536655). The BFR is arranged as 12 dimers that are packed together to form an approximately spherical molecule with a central cavity, in which large amounts of iron can be deposited (By similarity).</text>
</comment>
<comment type="subcellular location">
    <subcellularLocation>
        <location evidence="10">Cytoplasm</location>
    </subcellularLocation>
</comment>
<comment type="induction">
    <text evidence="5 6">Constitutively expressed during growth in the presence and absence of iron (at protein level) (PubMed:1536655). Constitutively transcribed in the presence and absence of iron (PubMed:19561120).</text>
</comment>
<comment type="disruption phenotype">
    <text evidence="4 6">No visible growth phenotype in iron-sufficient conditions (30 uM Fe(NO(3)3)), in low iron conditions (no more than 36 nM) cells grow at half the rate of wild-type (PubMed:15247377). A double bfrA-bfrB deletion grows as well as the single gene deletions (PubMed:15247377). Even in iron-sufficient media both single and double gene deletions have lower photosystem I content (PSI, which contains 12 Fe atoms), store about 50% wild-type levels of iron, and undergo iron-stress (PubMed:15247377). In the presence or absence of iron a double bfrA-bfrB deletion shows no change in sensitivity to H(2)O(2), while a triple bfrA-bfrB-mrgA deletion is less sensitive than the single mgrA deletion (PubMed:19561120).</text>
</comment>
<comment type="similarity">
    <text evidence="8">Belongs to the bacterioferritin family.</text>
</comment>
<comment type="caution">
    <text evidence="4 5 9">While the isolated BRF complex contains 0.25 heme residue per subunit, this protein does not have the conserved Met residue required for heme-binding, instead it has Thr-52 (PubMed:15247377, PubMed:1536655). The heme-binding subunit is probably BfrB (Probable) (PubMed:15247377).</text>
</comment>
<dbReference type="EC" id="1.16.3.1" evidence="9"/>
<dbReference type="EMBL" id="BA000022">
    <property type="protein sequence ID" value="BAA18637.1"/>
    <property type="molecule type" value="Genomic_DNA"/>
</dbReference>
<dbReference type="PIR" id="S76725">
    <property type="entry name" value="S76725"/>
</dbReference>
<dbReference type="SMR" id="P24602"/>
<dbReference type="STRING" id="1148.gene:10500402"/>
<dbReference type="PaxDb" id="1148-1653726"/>
<dbReference type="EnsemblBacteria" id="BAA18637">
    <property type="protein sequence ID" value="BAA18637"/>
    <property type="gene ID" value="BAA18637"/>
</dbReference>
<dbReference type="KEGG" id="syn:sll1341"/>
<dbReference type="eggNOG" id="COG2193">
    <property type="taxonomic scope" value="Bacteria"/>
</dbReference>
<dbReference type="InParanoid" id="P24602"/>
<dbReference type="PhylomeDB" id="P24602"/>
<dbReference type="Proteomes" id="UP000001425">
    <property type="component" value="Chromosome"/>
</dbReference>
<dbReference type="GO" id="GO:0005829">
    <property type="term" value="C:cytosol"/>
    <property type="evidence" value="ECO:0000318"/>
    <property type="project" value="GO_Central"/>
</dbReference>
<dbReference type="GO" id="GO:0008199">
    <property type="term" value="F:ferric iron binding"/>
    <property type="evidence" value="ECO:0007669"/>
    <property type="project" value="InterPro"/>
</dbReference>
<dbReference type="GO" id="GO:0004322">
    <property type="term" value="F:ferroxidase activity"/>
    <property type="evidence" value="ECO:0000318"/>
    <property type="project" value="GO_Central"/>
</dbReference>
<dbReference type="GO" id="GO:0020037">
    <property type="term" value="F:heme binding"/>
    <property type="evidence" value="ECO:0000318"/>
    <property type="project" value="GO_Central"/>
</dbReference>
<dbReference type="GO" id="GO:0005506">
    <property type="term" value="F:iron ion binding"/>
    <property type="evidence" value="ECO:0000318"/>
    <property type="project" value="GO_Central"/>
</dbReference>
<dbReference type="GO" id="GO:0006879">
    <property type="term" value="P:intracellular iron ion homeostasis"/>
    <property type="evidence" value="ECO:0007669"/>
    <property type="project" value="UniProtKB-KW"/>
</dbReference>
<dbReference type="GO" id="GO:0006826">
    <property type="term" value="P:iron ion transport"/>
    <property type="evidence" value="ECO:0007669"/>
    <property type="project" value="UniProtKB-KW"/>
</dbReference>
<dbReference type="CDD" id="cd00907">
    <property type="entry name" value="Bacterioferritin"/>
    <property type="match status" value="1"/>
</dbReference>
<dbReference type="Gene3D" id="1.20.1260.10">
    <property type="match status" value="1"/>
</dbReference>
<dbReference type="InterPro" id="IPR002024">
    <property type="entry name" value="Bacterioferritin"/>
</dbReference>
<dbReference type="InterPro" id="IPR012347">
    <property type="entry name" value="Ferritin-like"/>
</dbReference>
<dbReference type="InterPro" id="IPR009040">
    <property type="entry name" value="Ferritin-like_diiron"/>
</dbReference>
<dbReference type="InterPro" id="IPR009078">
    <property type="entry name" value="Ferritin-like_SF"/>
</dbReference>
<dbReference type="InterPro" id="IPR008331">
    <property type="entry name" value="Ferritin_DPS_dom"/>
</dbReference>
<dbReference type="NCBIfam" id="TIGR00754">
    <property type="entry name" value="bfr"/>
    <property type="match status" value="1"/>
</dbReference>
<dbReference type="PANTHER" id="PTHR30295">
    <property type="entry name" value="BACTERIOFERRITIN"/>
    <property type="match status" value="1"/>
</dbReference>
<dbReference type="PANTHER" id="PTHR30295:SF9">
    <property type="entry name" value="BACTERIOFERRITIN"/>
    <property type="match status" value="1"/>
</dbReference>
<dbReference type="Pfam" id="PF00210">
    <property type="entry name" value="Ferritin"/>
    <property type="match status" value="1"/>
</dbReference>
<dbReference type="PIRSF" id="PIRSF002560">
    <property type="entry name" value="Bacterioferritin"/>
    <property type="match status" value="1"/>
</dbReference>
<dbReference type="PRINTS" id="PR00601">
    <property type="entry name" value="BACFERRITIN"/>
</dbReference>
<dbReference type="SUPFAM" id="SSF47240">
    <property type="entry name" value="Ferritin-like"/>
    <property type="match status" value="1"/>
</dbReference>
<dbReference type="PROSITE" id="PS00549">
    <property type="entry name" value="BACTERIOFERRITIN"/>
    <property type="match status" value="1"/>
</dbReference>
<dbReference type="PROSITE" id="PS50905">
    <property type="entry name" value="FERRITIN_LIKE"/>
    <property type="match status" value="1"/>
</dbReference>
<accession>P24602</accession>
<accession>P74531</accession>
<keyword id="KW-0963">Cytoplasm</keyword>
<keyword id="KW-0903">Direct protein sequencing</keyword>
<keyword id="KW-0406">Ion transport</keyword>
<keyword id="KW-0408">Iron</keyword>
<keyword id="KW-0409">Iron storage</keyword>
<keyword id="KW-0410">Iron transport</keyword>
<keyword id="KW-0560">Oxidoreductase</keyword>
<keyword id="KW-1185">Reference proteome</keyword>
<keyword id="KW-0813">Transport</keyword>
<feature type="chain" id="PRO_0000192613" description="Bacterial ferritin">
    <location>
        <begin position="1"/>
        <end position="156"/>
    </location>
</feature>
<feature type="domain" description="Ferritin-like diiron" evidence="3">
    <location>
        <begin position="1"/>
        <end position="146"/>
    </location>
</feature>
<feature type="binding site" evidence="3">
    <location>
        <position position="18"/>
    </location>
    <ligand>
        <name>Fe cation</name>
        <dbReference type="ChEBI" id="CHEBI:24875"/>
        <label>1</label>
    </ligand>
</feature>
<feature type="binding site" evidence="3">
    <location>
        <position position="51"/>
    </location>
    <ligand>
        <name>Fe cation</name>
        <dbReference type="ChEBI" id="CHEBI:24875"/>
        <label>1</label>
    </ligand>
</feature>
<feature type="binding site" evidence="3">
    <location>
        <position position="51"/>
    </location>
    <ligand>
        <name>Fe cation</name>
        <dbReference type="ChEBI" id="CHEBI:24875"/>
        <label>2</label>
    </ligand>
</feature>
<feature type="binding site" evidence="3">
    <location>
        <position position="54"/>
    </location>
    <ligand>
        <name>Fe cation</name>
        <dbReference type="ChEBI" id="CHEBI:24875"/>
        <label>1</label>
    </ligand>
</feature>
<feature type="binding site" evidence="3">
    <location>
        <position position="94"/>
    </location>
    <ligand>
        <name>Fe cation</name>
        <dbReference type="ChEBI" id="CHEBI:24875"/>
        <label>2</label>
    </ligand>
</feature>
<feature type="binding site" evidence="3">
    <location>
        <position position="128"/>
    </location>
    <ligand>
        <name>Fe cation</name>
        <dbReference type="ChEBI" id="CHEBI:24875"/>
        <label>1</label>
    </ligand>
</feature>
<feature type="binding site" evidence="3">
    <location>
        <position position="128"/>
    </location>
    <ligand>
        <name>Fe cation</name>
        <dbReference type="ChEBI" id="CHEBI:24875"/>
        <label>2</label>
    </ligand>
</feature>
<feature type="binding site" evidence="3">
    <location>
        <position position="131"/>
    </location>
    <ligand>
        <name>Fe cation</name>
        <dbReference type="ChEBI" id="CHEBI:24875"/>
        <label>2</label>
    </ligand>
</feature>
<feature type="sequence conflict" description="In Ref. 2; AA sequence." evidence="8" ref="2">
    <original>AH</original>
    <variation>HA</variation>
    <location>
        <begin position="53"/>
        <end position="54"/>
    </location>
</feature>
<protein>
    <recommendedName>
        <fullName evidence="2">Bacterial ferritin</fullName>
        <shortName>BFR</shortName>
        <ecNumber evidence="9">1.16.3.1</ecNumber>
    </recommendedName>
    <alternativeName>
        <fullName evidence="1">Bacterial non-heme ferritin</fullName>
    </alternativeName>
    <alternativeName>
        <fullName evidence="7">Bacterioferritin BfrA</fullName>
    </alternativeName>
</protein>